<keyword id="KW-1003">Cell membrane</keyword>
<keyword id="KW-0966">Cell projection</keyword>
<keyword id="KW-0969">Cilium</keyword>
<keyword id="KW-0970">Cilium biogenesis/degradation</keyword>
<keyword id="KW-0175">Coiled coil</keyword>
<keyword id="KW-0963">Cytoplasm</keyword>
<keyword id="KW-0282">Flagellum</keyword>
<keyword id="KW-0472">Membrane</keyword>
<keyword id="KW-0812">Transmembrane</keyword>
<keyword id="KW-1133">Transmembrane helix</keyword>
<feature type="chain" id="PRO_5002722409" description="Cilia- and flagella-associated protein 65">
    <location>
        <begin position="1"/>
        <end position="2118"/>
    </location>
</feature>
<feature type="transmembrane region" description="Helical" evidence="3">
    <location>
        <begin position="6"/>
        <end position="26"/>
    </location>
</feature>
<feature type="domain" description="MSP" evidence="4">
    <location>
        <begin position="615"/>
        <end position="736"/>
    </location>
</feature>
<feature type="region of interest" description="Disordered" evidence="5">
    <location>
        <begin position="1007"/>
        <end position="1029"/>
    </location>
</feature>
<feature type="region of interest" description="Disordered" evidence="5">
    <location>
        <begin position="1764"/>
        <end position="1909"/>
    </location>
</feature>
<feature type="region of interest" description="Disordered" evidence="5">
    <location>
        <begin position="1924"/>
        <end position="1958"/>
    </location>
</feature>
<feature type="coiled-coil region" evidence="3">
    <location>
        <begin position="2016"/>
        <end position="2045"/>
    </location>
</feature>
<feature type="compositionally biased region" description="Gly residues" evidence="5">
    <location>
        <begin position="1825"/>
        <end position="1834"/>
    </location>
</feature>
<feature type="compositionally biased region" description="Low complexity" evidence="5">
    <location>
        <begin position="1840"/>
        <end position="1849"/>
    </location>
</feature>
<feature type="compositionally biased region" description="Basic residues" evidence="5">
    <location>
        <begin position="1850"/>
        <end position="1859"/>
    </location>
</feature>
<feature type="compositionally biased region" description="Low complexity" evidence="5">
    <location>
        <begin position="1892"/>
        <end position="1902"/>
    </location>
</feature>
<feature type="compositionally biased region" description="Low complexity" evidence="5">
    <location>
        <begin position="1936"/>
        <end position="1949"/>
    </location>
</feature>
<feature type="non-terminal residue">
    <location>
        <position position="2118"/>
    </location>
</feature>
<sequence length="2118" mass="220136">MSSSRGSLRALLLAAAAAAAAAAGAVSNKLGYWFSCRRFGLDCPEQLEWRHWNPGTEYVKQLVLKNVSTSVLKIRFKQPTSKAFGMDFPEPFKLRPGMSQPLKVVFRPLKQQHYSDNVELFVGNVSCLVPVHAYTPVTHIEVPPALDFGFTPTKETVTAQLPVRNTGDVRVDVLWKLDAPFSISPLFASLAPGEVVAFTASFTPPEACSYTASAACQLESGAAAICKISGIGKFPYLSVEQAGVDFGAVVVGQRVERLVRFGNHSVVPAHFAVTHDEAGPDDGVFTVGPARGTLGPEEYSMLKLSYTPRATGTFSSETFHIGTAGGNRVALNLRGTAVAPLVTLSTRAFNFGNVAAGATASRVLYIRNHSAVPVPYDFQVDPLDVFAISRTRGVLAPDSTAHVTITFRPMAGLAANLWRRVTLLLKDAEPQGVDLVATAYTDKSRPPPLSQRHVERYMARVLSGGPAVEESQLDSKPPSAATGDPAAALTVDSDALDFGSCSRLSASEYRSVTVTNHTPAKLTAFVLVPEWADPGAAPGDAPQRVFQVFPESADMRPYGQATFKVAFRPPRDAAFFSQQLALVAHTKSQRNFRLVAEHQVLPAWCVPLRATGNTFLHSNPEFGPKVELSSRAVAFPPCRPGERVHQTLLIANSGDTPVAFSFGAAGAALGPLFSAKPAAGVVPPQGHVLVALRFAPTDTRPAAANALVTFNGVASNAVSVSLRGAAHTPRLTTDLPSSTLYFRPTCVGASSQRAVTLHNPSRVPVAFRWRLPARLQGLVTVSPAAGALRGNESVQLQWSFTPAAQKLYEARAACLVMSPPEAANGNAAGATASAASLFPGAGLATGIEWYEGAGATAALAGMGEEEAADAVLLSLVGEGTQGAVALEPPSLELGDLRVGHPVRRPLLLQNCSDGVLRYSLEVGPAEDDQPPAGDATLVDFTAGLDSAAEGGVGGGAGGAGGAALECWVDEPEGALPARASKTVMVTLFPRYRKRYSLQVRCRSSTVAPLLTGPNRPPSGGAGPRPLDAGSEAAAAAAAAAAAAAAPLPPPVIAPLTASTTFPTLEVTDVYCEGLPKQLLWQLLGLNDLNHHLRTEVTATELRLRAAQDRGALTTEAASAAMRPFLMEFGTHGLGGRPRVVHVEISNPTPLPASWQLHSFDDPDGVELENWVEPGRPRTEGERMRDLIAEYKLFEMRPRSGELEPGARCTVTIEFRPSVEGSFELPVFLHITDGKRLRLQLQAVTTPEPLQLLALPPPLRTFRLEPVALGERAPPLQMYVLRNGGPAPLHWRLDTAPLAALAEASWGHPVLELVGPEEGDIEEGGVAAINWRFSPLEAKEYRVEVPVLLGDGGIEVIELLGRGFAPPPAPPHGAAAVQLIGPGAATSPAAPTTAAEDDDTPAAALDSVGGDAEAEAARAAAAADRDWITWRGLSSAPSAGMAGRLALVDHDLVSLGVTPVRGLTRRIIVLTNKSRYPLAFDWDLGCLAPPPPPGLAATQRAAAASAMMGLGGGSLLPASQLQLLAGRPLQGALAISPAAGSLEPGERLVCRVSLHAGVTPQVFEGEVRCHVRIDDDAVAEAEAAAAAAAAAGAAAVAAELPFVEQVEEVIAEAPVRGPPAPPPAVAAAQRASRLRSRLPVHQYMTTAVRTRIEPLNAAFTATMEARTRRLADATRPPSWPEPQSISVTLRGRILDERQLGALRYVPPHERAAARAAVVAGAAWVPPAMVPFWEEEGRSTPAVSAQPSSQGGGGYGVGGYGGGYGSGGSQGGEASVAPSGGDPGGYSPRGGMADSWPSLEPGLGMEETVVGPPTVGLDLSLSLQHAGGAGGAPGGDGDSDSRPGTPSMTAAAHHHHHHPRHAGPAPGSGTAEVMEVTFSGDQQPTGGPMPSPPSISGAPDPDSATPDDDFATSDAAVNAAAAVRAAGGGMGSPQPVDPGGSAAAAASELAPPALPPAPPRGGDIEYDALVSAREVLAGLFAELMEDADVVRAVAFLPEHEVPSFAEVRATPPPCYDPAVRAAAEAARAEAEARAAAEAATKAAAEAEAGAAFAIPAAAAQAATEPPALEDELAADTELARVLVAPEWRAFADFVLESAVLGLMQESAAGDWEMPEEEVGR</sequence>
<proteinExistence type="evidence at protein level"/>
<name>CFA65_CHLRE</name>
<comment type="function">
    <text evidence="1">May play a role in flagellar formation and mobility.</text>
</comment>
<comment type="subcellular location">
    <subcellularLocation>
        <location evidence="6">Cell projection</location>
        <location evidence="6">Cilium</location>
        <location evidence="6">Flagellum membrane</location>
        <topology evidence="3">Single-pass membrane protein</topology>
    </subcellularLocation>
    <subcellularLocation>
        <location evidence="1">Cytoplasm</location>
    </subcellularLocation>
</comment>
<comment type="similarity">
    <text evidence="8">Belongs to the CFAP65 family.</text>
</comment>
<gene>
    <name evidence="2" type="primary">CFAP65</name>
    <name evidence="7" type="synonym">FAP65</name>
    <name evidence="9" type="ORF">CHLREDRAFT_153955</name>
</gene>
<reference key="1">
    <citation type="journal article" date="2007" name="Science">
        <title>The Chlamydomonas genome reveals the evolution of key animal and plant functions.</title>
        <authorList>
            <person name="Merchant S.S."/>
            <person name="Prochnik S.E."/>
            <person name="Vallon O."/>
            <person name="Harris E.H."/>
            <person name="Karpowicz S.J."/>
            <person name="Witman G.B."/>
            <person name="Terry A."/>
            <person name="Salamov A."/>
            <person name="Fritz-Laylin L.K."/>
            <person name="Marechal-Drouard L."/>
            <person name="Marshall W.F."/>
            <person name="Qu L.H."/>
            <person name="Nelson D.R."/>
            <person name="Sanderfoot A.A."/>
            <person name="Spalding M.H."/>
            <person name="Kapitonov V.V."/>
            <person name="Ren Q."/>
            <person name="Ferris P."/>
            <person name="Lindquist E."/>
            <person name="Shapiro H."/>
            <person name="Lucas S.M."/>
            <person name="Grimwood J."/>
            <person name="Schmutz J."/>
            <person name="Cardol P."/>
            <person name="Cerutti H."/>
            <person name="Chanfreau G."/>
            <person name="Chen C.L."/>
            <person name="Cognat V."/>
            <person name="Croft M.T."/>
            <person name="Dent R."/>
            <person name="Dutcher S."/>
            <person name="Fernandez E."/>
            <person name="Fukuzawa H."/>
            <person name="Gonzalez-Ballester D."/>
            <person name="Gonzalez-Halphen D."/>
            <person name="Hallmann A."/>
            <person name="Hanikenne M."/>
            <person name="Hippler M."/>
            <person name="Inwood W."/>
            <person name="Jabbari K."/>
            <person name="Kalanon M."/>
            <person name="Kuras R."/>
            <person name="Lefebvre P.A."/>
            <person name="Lemaire S.D."/>
            <person name="Lobanov A.V."/>
            <person name="Lohr M."/>
            <person name="Manuell A."/>
            <person name="Meier I."/>
            <person name="Mets L."/>
            <person name="Mittag M."/>
            <person name="Mittelmeier T."/>
            <person name="Moroney J.V."/>
            <person name="Moseley J."/>
            <person name="Napoli C."/>
            <person name="Nedelcu A.M."/>
            <person name="Niyogi K."/>
            <person name="Novoselov S.V."/>
            <person name="Paulsen I.T."/>
            <person name="Pazour G.J."/>
            <person name="Purton S."/>
            <person name="Ral J.P."/>
            <person name="Riano-Pachon D.M."/>
            <person name="Riekhof W."/>
            <person name="Rymarquis L."/>
            <person name="Schroda M."/>
            <person name="Stern D."/>
            <person name="Umen J."/>
            <person name="Willows R."/>
            <person name="Wilson N."/>
            <person name="Zimmer S.L."/>
            <person name="Allmer J."/>
            <person name="Balk J."/>
            <person name="Bisova K."/>
            <person name="Chen C.J."/>
            <person name="Elias M."/>
            <person name="Gendler K."/>
            <person name="Hauser C."/>
            <person name="Lamb M.R."/>
            <person name="Ledford H."/>
            <person name="Long J.C."/>
            <person name="Minagawa J."/>
            <person name="Page M.D."/>
            <person name="Pan J."/>
            <person name="Pootakham W."/>
            <person name="Roje S."/>
            <person name="Rose A."/>
            <person name="Stahlberg E."/>
            <person name="Terauchi A.M."/>
            <person name="Yang P."/>
            <person name="Ball S."/>
            <person name="Bowler C."/>
            <person name="Dieckmann C.L."/>
            <person name="Gladyshev V.N."/>
            <person name="Green P."/>
            <person name="Jorgensen R."/>
            <person name="Mayfield S."/>
            <person name="Mueller-Roeber B."/>
            <person name="Rajamani S."/>
            <person name="Sayre R.T."/>
            <person name="Brokstein P."/>
            <person name="Dubchak I."/>
            <person name="Goodstein D."/>
            <person name="Hornick L."/>
            <person name="Huang Y.W."/>
            <person name="Jhaveri J."/>
            <person name="Luo Y."/>
            <person name="Martinez D."/>
            <person name="Ngau W.C."/>
            <person name="Otillar B."/>
            <person name="Poliakov A."/>
            <person name="Porter A."/>
            <person name="Szajkowski L."/>
            <person name="Werner G."/>
            <person name="Zhou K."/>
            <person name="Grigoriev I.V."/>
            <person name="Rokhsar D.S."/>
            <person name="Grossman A.R."/>
        </authorList>
    </citation>
    <scope>NUCLEOTIDE SEQUENCE [LARGE SCALE GENOMIC DNA]</scope>
    <source>
        <strain>CC-503</strain>
    </source>
</reference>
<reference key="2">
    <citation type="journal article" date="2005" name="J. Cell Biol.">
        <title>Proteomic analysis of a eukaryotic cilium.</title>
        <authorList>
            <person name="Pazour G.J."/>
            <person name="Agrin N."/>
            <person name="Leszyk J."/>
            <person name="Witman G.B."/>
        </authorList>
    </citation>
    <scope>IDENTIFICATION BY MASS SPECTROMETRY</scope>
    <scope>SUBCELLULAR LOCATION</scope>
</reference>
<evidence type="ECO:0000250" key="1">
    <source>
        <dbReference type="UniProtKB" id="Q3V0B4"/>
    </source>
</evidence>
<evidence type="ECO:0000250" key="2">
    <source>
        <dbReference type="UniProtKB" id="Q6ZU64"/>
    </source>
</evidence>
<evidence type="ECO:0000255" key="3"/>
<evidence type="ECO:0000255" key="4">
    <source>
        <dbReference type="PROSITE-ProRule" id="PRU00132"/>
    </source>
</evidence>
<evidence type="ECO:0000256" key="5">
    <source>
        <dbReference type="SAM" id="MobiDB-lite"/>
    </source>
</evidence>
<evidence type="ECO:0000269" key="6">
    <source>
    </source>
</evidence>
<evidence type="ECO:0000303" key="7">
    <source>
    </source>
</evidence>
<evidence type="ECO:0000305" key="8"/>
<evidence type="ECO:0000312" key="9">
    <source>
        <dbReference type="EMBL" id="EDO97267.1"/>
    </source>
</evidence>
<accession>A8JFU2</accession>
<protein>
    <recommendedName>
        <fullName evidence="8">Cilia- and flagella-associated protein 65</fullName>
    </recommendedName>
</protein>
<dbReference type="EMBL" id="DS496178">
    <property type="protein sequence ID" value="EDO97267.1"/>
    <property type="molecule type" value="Genomic_DNA"/>
</dbReference>
<dbReference type="RefSeq" id="XP_001702074.1">
    <property type="nucleotide sequence ID" value="XM_001702022.1"/>
</dbReference>
<dbReference type="SMR" id="A8JFU2"/>
<dbReference type="PaxDb" id="3055-EDO97267"/>
<dbReference type="eggNOG" id="ENOG502QSJW">
    <property type="taxonomic scope" value="Eukaryota"/>
</dbReference>
<dbReference type="HOGENOM" id="CLU_232155_0_0_1"/>
<dbReference type="GO" id="GO:0005737">
    <property type="term" value="C:cytoplasm"/>
    <property type="evidence" value="ECO:0007669"/>
    <property type="project" value="UniProtKB-SubCell"/>
</dbReference>
<dbReference type="GO" id="GO:0031514">
    <property type="term" value="C:motile cilium"/>
    <property type="evidence" value="ECO:0000314"/>
    <property type="project" value="UniProtKB"/>
</dbReference>
<dbReference type="GO" id="GO:0005886">
    <property type="term" value="C:plasma membrane"/>
    <property type="evidence" value="ECO:0007669"/>
    <property type="project" value="UniProtKB-KW"/>
</dbReference>
<dbReference type="GO" id="GO:0030030">
    <property type="term" value="P:cell projection organization"/>
    <property type="evidence" value="ECO:0007669"/>
    <property type="project" value="UniProtKB-KW"/>
</dbReference>
<dbReference type="Gene3D" id="2.60.40.10">
    <property type="entry name" value="Immunoglobulins"/>
    <property type="match status" value="10"/>
</dbReference>
<dbReference type="InterPro" id="IPR052614">
    <property type="entry name" value="CFAP65"/>
</dbReference>
<dbReference type="InterPro" id="IPR013783">
    <property type="entry name" value="Ig-like_fold"/>
</dbReference>
<dbReference type="InterPro" id="IPR056305">
    <property type="entry name" value="Ig_CFAP65_10th"/>
</dbReference>
<dbReference type="PANTHER" id="PTHR46127">
    <property type="entry name" value="CILIA- AND FLAGELLA-ASSOCIATED PROTEIN 65"/>
    <property type="match status" value="1"/>
</dbReference>
<dbReference type="PANTHER" id="PTHR46127:SF1">
    <property type="entry name" value="CILIA- AND FLAGELLA-ASSOCIATED PROTEIN 65"/>
    <property type="match status" value="1"/>
</dbReference>
<dbReference type="Pfam" id="PF24291">
    <property type="entry name" value="Ig_CFAP65"/>
    <property type="match status" value="1"/>
</dbReference>
<dbReference type="Pfam" id="PF24507">
    <property type="entry name" value="Ig_CFAP65_4th"/>
    <property type="match status" value="3"/>
</dbReference>
<dbReference type="Pfam" id="PF25249">
    <property type="entry name" value="Ig_CFAP65_7th"/>
    <property type="match status" value="1"/>
</dbReference>
<dbReference type="Pfam" id="PF24816">
    <property type="entry name" value="Ig_CFAP65__9th"/>
    <property type="match status" value="1"/>
</dbReference>
<organism>
    <name type="scientific">Chlamydomonas reinhardtii</name>
    <name type="common">Chlamydomonas smithii</name>
    <dbReference type="NCBI Taxonomy" id="3055"/>
    <lineage>
        <taxon>Eukaryota</taxon>
        <taxon>Viridiplantae</taxon>
        <taxon>Chlorophyta</taxon>
        <taxon>core chlorophytes</taxon>
        <taxon>Chlorophyceae</taxon>
        <taxon>CS clade</taxon>
        <taxon>Chlamydomonadales</taxon>
        <taxon>Chlamydomonadaceae</taxon>
        <taxon>Chlamydomonas</taxon>
    </lineage>
</organism>